<keyword id="KW-0013">ADP-ribosylation</keyword>
<keyword id="KW-0496">Mitochondrion</keyword>
<keyword id="KW-0521">NADP</keyword>
<keyword id="KW-0560">Oxidoreductase</keyword>
<keyword id="KW-1185">Reference proteome</keyword>
<keyword id="KW-0809">Transit peptide</keyword>
<organism>
    <name type="scientific">Gorilla gorilla gorilla</name>
    <name type="common">Western lowland gorilla</name>
    <dbReference type="NCBI Taxonomy" id="9595"/>
    <lineage>
        <taxon>Eukaryota</taxon>
        <taxon>Metazoa</taxon>
        <taxon>Chordata</taxon>
        <taxon>Craniata</taxon>
        <taxon>Vertebrata</taxon>
        <taxon>Euteleostomi</taxon>
        <taxon>Mammalia</taxon>
        <taxon>Eutheria</taxon>
        <taxon>Euarchontoglires</taxon>
        <taxon>Primates</taxon>
        <taxon>Haplorrhini</taxon>
        <taxon>Catarrhini</taxon>
        <taxon>Hominidae</taxon>
        <taxon>Gorilla</taxon>
    </lineage>
</organism>
<sequence>MYRYLAKALLPSRAGTAALGSAANHSAALLGRSRGQPAAASQPGLALAARRHYSELVADREDDPNFFKMVEGFFDRGASIVEDKLVKDLRTQESEEQKRNRVRGILRIIKPCNHVLSLCFPIRRDDGSWEVIEGYRAQHSQHRTPCKGGIRYSTDVSVDEVKALASLMTYKCAVVDVPFGGAKAGVKINPKNYTENELEKITRRFTMELAKKGFIGPGVDVPAPDMNTGEREMSWIADTYASTIGHYDINAHACVTGKPISQGGIHGRISATGRGVFHGIENFINEASYMSILGMTPGFRDKTFVVQGFGNVGLHSMRYLHRFGAKCIAVGESDGSIWNPDGIDPKELEDFRLQHGSILGFPKAKPYEGSILEVDCDILIPAATEKQLTKSNAPRVKAKIIAEGANGPTTPEADRIFQERNILVIPDLYLNAGGVTVSYFEWLKNLNHVSYGRLTFKYERDSNYHLLMSVQESLERKFGKHGGTIPIVPTADFQDSISGASEKDIVHSALAYTMERSARQIMHTAMKYNLGLDLRTAAYVNAIEKVFKVYSEAGVTFT</sequence>
<gene>
    <name type="primary">GLUD2</name>
</gene>
<comment type="function">
    <text>Important for recycling the chief excitatory neurotransmitter, glutamate, during neurotransmission.</text>
</comment>
<comment type="catalytic activity">
    <reaction evidence="2">
        <text>L-glutamate + NAD(+) + H2O = 2-oxoglutarate + NH4(+) + NADH + H(+)</text>
        <dbReference type="Rhea" id="RHEA:15133"/>
        <dbReference type="ChEBI" id="CHEBI:15377"/>
        <dbReference type="ChEBI" id="CHEBI:15378"/>
        <dbReference type="ChEBI" id="CHEBI:16810"/>
        <dbReference type="ChEBI" id="CHEBI:28938"/>
        <dbReference type="ChEBI" id="CHEBI:29985"/>
        <dbReference type="ChEBI" id="CHEBI:57540"/>
        <dbReference type="ChEBI" id="CHEBI:57945"/>
        <dbReference type="EC" id="1.4.1.3"/>
    </reaction>
</comment>
<comment type="catalytic activity">
    <reaction evidence="2">
        <text>L-glutamate + NADP(+) + H2O = 2-oxoglutarate + NH4(+) + NADPH + H(+)</text>
        <dbReference type="Rhea" id="RHEA:11612"/>
        <dbReference type="ChEBI" id="CHEBI:15377"/>
        <dbReference type="ChEBI" id="CHEBI:15378"/>
        <dbReference type="ChEBI" id="CHEBI:16810"/>
        <dbReference type="ChEBI" id="CHEBI:28938"/>
        <dbReference type="ChEBI" id="CHEBI:29985"/>
        <dbReference type="ChEBI" id="CHEBI:57783"/>
        <dbReference type="ChEBI" id="CHEBI:58349"/>
        <dbReference type="EC" id="1.4.1.3"/>
    </reaction>
</comment>
<comment type="subunit">
    <text evidence="1">Homohexamer.</text>
</comment>
<comment type="subcellular location">
    <subcellularLocation>
        <location evidence="1">Mitochondrion matrix</location>
    </subcellularLocation>
</comment>
<comment type="PTM">
    <text evidence="1">Stoichiometry shows that ADP-ribosylation occurs in one subunit per catalytically active homohexamer.</text>
</comment>
<comment type="similarity">
    <text evidence="3">Belongs to the Glu/Leu/Phe/Val dehydrogenases family.</text>
</comment>
<dbReference type="EC" id="1.4.1.3"/>
<dbReference type="EMBL" id="AY588267">
    <property type="protein sequence ID" value="AAU03133.1"/>
    <property type="molecule type" value="Genomic_DNA"/>
</dbReference>
<dbReference type="RefSeq" id="XP_018874354.3">
    <property type="nucleotide sequence ID" value="XM_019018809.4"/>
</dbReference>
<dbReference type="SMR" id="Q64I01"/>
<dbReference type="FunCoup" id="Q64I01">
    <property type="interactions" value="472"/>
</dbReference>
<dbReference type="STRING" id="9593.ENSGGOP00000046751"/>
<dbReference type="GeneID" id="101125483"/>
<dbReference type="eggNOG" id="KOG2250">
    <property type="taxonomic scope" value="Eukaryota"/>
</dbReference>
<dbReference type="InParanoid" id="Q64I01"/>
<dbReference type="Proteomes" id="UP000001519">
    <property type="component" value="Unplaced"/>
</dbReference>
<dbReference type="GO" id="GO:0005759">
    <property type="term" value="C:mitochondrial matrix"/>
    <property type="evidence" value="ECO:0007669"/>
    <property type="project" value="UniProtKB-SubCell"/>
</dbReference>
<dbReference type="GO" id="GO:0005739">
    <property type="term" value="C:mitochondrion"/>
    <property type="evidence" value="ECO:0000318"/>
    <property type="project" value="GO_Central"/>
</dbReference>
<dbReference type="GO" id="GO:0004352">
    <property type="term" value="F:glutamate dehydrogenase (NAD+) activity"/>
    <property type="evidence" value="ECO:0000318"/>
    <property type="project" value="GO_Central"/>
</dbReference>
<dbReference type="GO" id="GO:0004354">
    <property type="term" value="F:glutamate dehydrogenase (NADP+) activity"/>
    <property type="evidence" value="ECO:0007669"/>
    <property type="project" value="RHEA"/>
</dbReference>
<dbReference type="GO" id="GO:0006538">
    <property type="term" value="P:glutamate catabolic process"/>
    <property type="evidence" value="ECO:0000318"/>
    <property type="project" value="GO_Central"/>
</dbReference>
<dbReference type="CDD" id="cd01076">
    <property type="entry name" value="NAD_bind_1_Glu_DH"/>
    <property type="match status" value="1"/>
</dbReference>
<dbReference type="FunFam" id="1.10.287.140:FF:000001">
    <property type="entry name" value="Glutamate dehydrogenase 1, mitochondrial"/>
    <property type="match status" value="1"/>
</dbReference>
<dbReference type="FunFam" id="3.40.50.10860:FF:000007">
    <property type="entry name" value="Glutamate dehydrogenase 1, mitochondrial"/>
    <property type="match status" value="1"/>
</dbReference>
<dbReference type="FunFam" id="3.40.50.720:FF:000100">
    <property type="entry name" value="Glutamate dehydrogenase 1, mitochondrial"/>
    <property type="match status" value="1"/>
</dbReference>
<dbReference type="Gene3D" id="1.10.287.140">
    <property type="match status" value="1"/>
</dbReference>
<dbReference type="Gene3D" id="3.40.50.10860">
    <property type="entry name" value="Leucine Dehydrogenase, chain A, domain 1"/>
    <property type="match status" value="1"/>
</dbReference>
<dbReference type="Gene3D" id="3.40.50.720">
    <property type="entry name" value="NAD(P)-binding Rossmann-like Domain"/>
    <property type="match status" value="1"/>
</dbReference>
<dbReference type="InterPro" id="IPR046346">
    <property type="entry name" value="Aminoacid_DH-like_N_sf"/>
</dbReference>
<dbReference type="InterPro" id="IPR006095">
    <property type="entry name" value="Glu/Leu/Phe/Val/Trp_DH"/>
</dbReference>
<dbReference type="InterPro" id="IPR006096">
    <property type="entry name" value="Glu/Leu/Phe/Val/Trp_DH_C"/>
</dbReference>
<dbReference type="InterPro" id="IPR006097">
    <property type="entry name" value="Glu/Leu/Phe/Val/Trp_DH_dimer"/>
</dbReference>
<dbReference type="InterPro" id="IPR033524">
    <property type="entry name" value="Glu/Leu/Phe/Val_DH_AS"/>
</dbReference>
<dbReference type="InterPro" id="IPR036291">
    <property type="entry name" value="NAD(P)-bd_dom_sf"/>
</dbReference>
<dbReference type="InterPro" id="IPR033922">
    <property type="entry name" value="NAD_bind_Glu_DH"/>
</dbReference>
<dbReference type="PANTHER" id="PTHR11606">
    <property type="entry name" value="GLUTAMATE DEHYDROGENASE"/>
    <property type="match status" value="1"/>
</dbReference>
<dbReference type="PANTHER" id="PTHR11606:SF15">
    <property type="entry name" value="GLUTAMATE DEHYDROGENASE 2, MITOCHONDRIAL"/>
    <property type="match status" value="1"/>
</dbReference>
<dbReference type="Pfam" id="PF00208">
    <property type="entry name" value="ELFV_dehydrog"/>
    <property type="match status" value="1"/>
</dbReference>
<dbReference type="Pfam" id="PF02812">
    <property type="entry name" value="ELFV_dehydrog_N"/>
    <property type="match status" value="1"/>
</dbReference>
<dbReference type="PRINTS" id="PR00082">
    <property type="entry name" value="GLFDHDRGNASE"/>
</dbReference>
<dbReference type="SMART" id="SM00839">
    <property type="entry name" value="ELFV_dehydrog"/>
    <property type="match status" value="1"/>
</dbReference>
<dbReference type="SUPFAM" id="SSF53223">
    <property type="entry name" value="Aminoacid dehydrogenase-like, N-terminal domain"/>
    <property type="match status" value="1"/>
</dbReference>
<dbReference type="SUPFAM" id="SSF51735">
    <property type="entry name" value="NAD(P)-binding Rossmann-fold domains"/>
    <property type="match status" value="1"/>
</dbReference>
<dbReference type="PROSITE" id="PS00074">
    <property type="entry name" value="GLFV_DEHYDROGENASE"/>
    <property type="match status" value="1"/>
</dbReference>
<evidence type="ECO:0000250" key="1"/>
<evidence type="ECO:0000255" key="2">
    <source>
        <dbReference type="PROSITE-ProRule" id="PRU10011"/>
    </source>
</evidence>
<evidence type="ECO:0000305" key="3"/>
<feature type="transit peptide" description="Mitochondrion" evidence="1">
    <location>
        <begin position="1"/>
        <end position="53"/>
    </location>
</feature>
<feature type="chain" id="PRO_0000007207" description="Glutamate dehydrogenase 2, mitochondrial">
    <location>
        <begin position="54"/>
        <end position="558"/>
    </location>
</feature>
<feature type="active site" evidence="2">
    <location>
        <position position="183"/>
    </location>
</feature>
<feature type="binding site" evidence="1">
    <location>
        <position position="84"/>
    </location>
    <ligand>
        <name>substrate</name>
    </ligand>
</feature>
<feature type="modified residue" description="ADP-ribosylcysteine" evidence="1">
    <location>
        <position position="172"/>
    </location>
</feature>
<accession>Q64I01</accession>
<reference key="1">
    <citation type="journal article" date="2004" name="Nat. Genet.">
        <title>Birth and adaptive evolution of a hominoid gene that supports high neurotransmitter flux.</title>
        <authorList>
            <person name="Burki F."/>
            <person name="Kaessmann H."/>
        </authorList>
    </citation>
    <scope>NUCLEOTIDE SEQUENCE [GENOMIC DNA]</scope>
</reference>
<proteinExistence type="inferred from homology"/>
<protein>
    <recommendedName>
        <fullName>Glutamate dehydrogenase 2, mitochondrial</fullName>
        <shortName>GDH 2</shortName>
        <ecNumber>1.4.1.3</ecNumber>
    </recommendedName>
</protein>
<name>DHE4_GORGO</name>